<protein>
    <recommendedName>
        <fullName evidence="1">Ribulose bisphosphate carboxylase small subunit, chloroplastic 4</fullName>
        <shortName evidence="1">RuBisCO small subunit 4</shortName>
    </recommendedName>
</protein>
<sequence length="182" mass="20534">MSAAMMNKSVVLSKQCTKPAATPKVVTSKRSFASTVANKNREMMVWQPFNNKMFETFSFLPPLTDEQISKQVDYILANSWTPCLEFAASDQAYAGNENCIRMGPVASTYQDNRYWTMWKLPMFGCTDGSQVLSEIQACTNAFPDAYIRLVCFDANRQVQISGFLVHRPPSATDYRLPADRQV</sequence>
<accession>P16137</accession>
<name>RBS4_ACEAT</name>
<proteinExistence type="evidence at transcript level"/>
<comment type="function">
    <text evidence="1">RuBisCO catalyzes two reactions: the carboxylation of D-ribulose 1,5-bisphosphate, the primary event in carbon dioxide fixation, as well as the oxidative fragmentation of the pentose substrate. Both reactions occur simultaneously and in competition at the same active site. Although the small subunit is not catalytic it is essential for maximal activity.</text>
</comment>
<comment type="subunit">
    <text evidence="1">Heterohexadecamer of 8 large and 8 small subunits.</text>
</comment>
<comment type="subcellular location">
    <subcellularLocation>
        <location evidence="1">Plastid</location>
        <location evidence="1">Chloroplast</location>
    </subcellularLocation>
</comment>
<comment type="miscellaneous">
    <text evidence="1">The basic functional RuBisCO is composed of a large chain homodimer in a 'head-to-tail' conformation. In form I RuBisCO this homodimer is arranged in a barrel-like tetramer with the small subunits forming a tetrameric 'cap' on each end of the 'barrel'.</text>
</comment>
<comment type="similarity">
    <text evidence="1">Belongs to the RuBisCO small chain family.</text>
</comment>
<evidence type="ECO:0000255" key="1">
    <source>
        <dbReference type="HAMAP-Rule" id="MF_00860"/>
    </source>
</evidence>
<keyword id="KW-0113">Calvin cycle</keyword>
<keyword id="KW-0120">Carbon dioxide fixation</keyword>
<keyword id="KW-0150">Chloroplast</keyword>
<keyword id="KW-0601">Photorespiration</keyword>
<keyword id="KW-0602">Photosynthesis</keyword>
<keyword id="KW-0934">Plastid</keyword>
<keyword id="KW-0809">Transit peptide</keyword>
<feature type="transit peptide" description="Chloroplast" evidence="1">
    <location>
        <begin position="1"/>
        <end position="41"/>
    </location>
</feature>
<feature type="chain" id="PRO_0000031457" description="Ribulose bisphosphate carboxylase small subunit, chloroplastic 4" evidence="1">
    <location>
        <begin position="42"/>
        <end position="182"/>
    </location>
</feature>
<reference key="1">
    <citation type="journal article" date="1989" name="Mol. Gen. Genet.">
        <title>Strong homology between the small subunit of ribulose-1,5-bisphosphate carboxylase/oxygenase of two species of Acetabularia and the occurrence of unusual codon usage.</title>
        <authorList>
            <person name="Schneider S.U."/>
            <person name="Leible M.B."/>
            <person name="Yang X.P."/>
        </authorList>
    </citation>
    <scope>NUCLEOTIDE SEQUENCE [MRNA]</scope>
    <source>
        <strain>17</strain>
    </source>
</reference>
<organism>
    <name type="scientific">Acetabularia acetabulum</name>
    <name type="common">Mermaid's wine glass</name>
    <name type="synonym">Acetabularia mediterranea</name>
    <dbReference type="NCBI Taxonomy" id="35845"/>
    <lineage>
        <taxon>Eukaryota</taxon>
        <taxon>Viridiplantae</taxon>
        <taxon>Chlorophyta</taxon>
        <taxon>Ulvophyceae</taxon>
        <taxon>TCBD clade</taxon>
        <taxon>Dasycladales</taxon>
        <taxon>Polyphysaceae</taxon>
        <taxon>Acetabularia</taxon>
    </lineage>
</organism>
<gene>
    <name evidence="1" type="primary">RBCS4</name>
    <name type="synonym">RBCS-4</name>
</gene>
<dbReference type="EMBL" id="X51814">
    <property type="protein sequence ID" value="CAA36111.1"/>
    <property type="molecule type" value="mRNA"/>
</dbReference>
<dbReference type="PIR" id="S05350">
    <property type="entry name" value="RKJK4M"/>
</dbReference>
<dbReference type="SMR" id="P16137"/>
<dbReference type="GO" id="GO:0009507">
    <property type="term" value="C:chloroplast"/>
    <property type="evidence" value="ECO:0007669"/>
    <property type="project" value="UniProtKB-SubCell"/>
</dbReference>
<dbReference type="GO" id="GO:0016984">
    <property type="term" value="F:ribulose-bisphosphate carboxylase activity"/>
    <property type="evidence" value="ECO:0007669"/>
    <property type="project" value="UniProtKB-UniRule"/>
</dbReference>
<dbReference type="GO" id="GO:0009853">
    <property type="term" value="P:photorespiration"/>
    <property type="evidence" value="ECO:0007669"/>
    <property type="project" value="UniProtKB-KW"/>
</dbReference>
<dbReference type="GO" id="GO:0019253">
    <property type="term" value="P:reductive pentose-phosphate cycle"/>
    <property type="evidence" value="ECO:0007669"/>
    <property type="project" value="UniProtKB-UniRule"/>
</dbReference>
<dbReference type="CDD" id="cd03527">
    <property type="entry name" value="RuBisCO_small"/>
    <property type="match status" value="1"/>
</dbReference>
<dbReference type="FunFam" id="3.30.190.10:FF:000001">
    <property type="entry name" value="Ribulose bisphosphate carboxylase small chain, chloroplastic"/>
    <property type="match status" value="1"/>
</dbReference>
<dbReference type="Gene3D" id="3.30.190.10">
    <property type="entry name" value="Ribulose bisphosphate carboxylase, small subunit"/>
    <property type="match status" value="1"/>
</dbReference>
<dbReference type="HAMAP" id="MF_00859">
    <property type="entry name" value="RuBisCO_S_bact"/>
    <property type="match status" value="1"/>
</dbReference>
<dbReference type="InterPro" id="IPR024681">
    <property type="entry name" value="RuBisCO_ssu"/>
</dbReference>
<dbReference type="InterPro" id="IPR000894">
    <property type="entry name" value="RuBisCO_ssu_dom"/>
</dbReference>
<dbReference type="InterPro" id="IPR036385">
    <property type="entry name" value="RuBisCO_ssu_sf"/>
</dbReference>
<dbReference type="PANTHER" id="PTHR31262">
    <property type="entry name" value="RIBULOSE BISPHOSPHATE CARBOXYLASE SMALL CHAIN 1, CHLOROPLASTIC"/>
    <property type="match status" value="1"/>
</dbReference>
<dbReference type="PANTHER" id="PTHR31262:SF0">
    <property type="entry name" value="RIBULOSE BISPHOSPHATE CARBOXYLASE SMALL SUBUNIT, CHLOROPLASTIC 1"/>
    <property type="match status" value="1"/>
</dbReference>
<dbReference type="Pfam" id="PF00101">
    <property type="entry name" value="RuBisCO_small"/>
    <property type="match status" value="1"/>
</dbReference>
<dbReference type="PRINTS" id="PR00152">
    <property type="entry name" value="RUBISCOSMALL"/>
</dbReference>
<dbReference type="SMART" id="SM00961">
    <property type="entry name" value="RuBisCO_small"/>
    <property type="match status" value="1"/>
</dbReference>
<dbReference type="SUPFAM" id="SSF55239">
    <property type="entry name" value="RuBisCO, small subunit"/>
    <property type="match status" value="1"/>
</dbReference>